<name>PPAC_STRGC</name>
<evidence type="ECO:0000250" key="1"/>
<evidence type="ECO:0000305" key="2"/>
<evidence type="ECO:0007829" key="3">
    <source>
        <dbReference type="PDB" id="1K20"/>
    </source>
</evidence>
<organism>
    <name type="scientific">Streptococcus gordonii (strain Challis / ATCC 35105 / BCRC 15272 / CH1 / DL1 / V288)</name>
    <dbReference type="NCBI Taxonomy" id="467705"/>
    <lineage>
        <taxon>Bacteria</taxon>
        <taxon>Bacillati</taxon>
        <taxon>Bacillota</taxon>
        <taxon>Bacilli</taxon>
        <taxon>Lactobacillales</taxon>
        <taxon>Streptococcaceae</taxon>
        <taxon>Streptococcus</taxon>
    </lineage>
</organism>
<dbReference type="EC" id="3.6.1.1"/>
<dbReference type="EMBL" id="U57759">
    <property type="protein sequence ID" value="AAB39104.1"/>
    <property type="molecule type" value="Genomic_DNA"/>
</dbReference>
<dbReference type="EMBL" id="CP000725">
    <property type="protein sequence ID" value="ABV09962.1"/>
    <property type="molecule type" value="Genomic_DNA"/>
</dbReference>
<dbReference type="RefSeq" id="WP_012130706.1">
    <property type="nucleotide sequence ID" value="NC_009785.1"/>
</dbReference>
<dbReference type="PDB" id="1K20">
    <property type="method" value="X-ray"/>
    <property type="resolution" value="1.50 A"/>
    <property type="chains" value="A/B=2-311"/>
</dbReference>
<dbReference type="PDB" id="1WPP">
    <property type="method" value="X-ray"/>
    <property type="resolution" value="2.05 A"/>
    <property type="chains" value="A/B=1-311"/>
</dbReference>
<dbReference type="PDBsum" id="1K20"/>
<dbReference type="PDBsum" id="1WPP"/>
<dbReference type="SMR" id="P95765"/>
<dbReference type="STRING" id="467705.SGO_1648"/>
<dbReference type="KEGG" id="sgo:SGO_1648"/>
<dbReference type="eggNOG" id="COG1227">
    <property type="taxonomic scope" value="Bacteria"/>
</dbReference>
<dbReference type="HOGENOM" id="CLU_025243_0_1_9"/>
<dbReference type="BRENDA" id="3.6.1.1">
    <property type="organism ID" value="5934"/>
</dbReference>
<dbReference type="EvolutionaryTrace" id="P95765"/>
<dbReference type="Proteomes" id="UP000001131">
    <property type="component" value="Chromosome"/>
</dbReference>
<dbReference type="GO" id="GO:0005737">
    <property type="term" value="C:cytoplasm"/>
    <property type="evidence" value="ECO:0007669"/>
    <property type="project" value="UniProtKB-SubCell"/>
</dbReference>
<dbReference type="GO" id="GO:0004427">
    <property type="term" value="F:inorganic diphosphate phosphatase activity"/>
    <property type="evidence" value="ECO:0007669"/>
    <property type="project" value="UniProtKB-UniRule"/>
</dbReference>
<dbReference type="GO" id="GO:0030145">
    <property type="term" value="F:manganese ion binding"/>
    <property type="evidence" value="ECO:0007669"/>
    <property type="project" value="UniProtKB-UniRule"/>
</dbReference>
<dbReference type="FunFam" id="3.10.310.20:FF:000001">
    <property type="entry name" value="Probable manganese-dependent inorganic pyrophosphatase"/>
    <property type="match status" value="1"/>
</dbReference>
<dbReference type="FunFam" id="3.90.1640.10:FF:000001">
    <property type="entry name" value="Probable manganese-dependent inorganic pyrophosphatase"/>
    <property type="match status" value="1"/>
</dbReference>
<dbReference type="Gene3D" id="3.10.310.20">
    <property type="entry name" value="DHHA2 domain"/>
    <property type="match status" value="1"/>
</dbReference>
<dbReference type="Gene3D" id="3.90.1640.10">
    <property type="entry name" value="inorganic pyrophosphatase (n-terminal core)"/>
    <property type="match status" value="1"/>
</dbReference>
<dbReference type="HAMAP" id="MF_00207">
    <property type="entry name" value="PPase_C"/>
    <property type="match status" value="1"/>
</dbReference>
<dbReference type="InterPro" id="IPR001667">
    <property type="entry name" value="DDH_dom"/>
</dbReference>
<dbReference type="InterPro" id="IPR038763">
    <property type="entry name" value="DHH_sf"/>
</dbReference>
<dbReference type="InterPro" id="IPR004097">
    <property type="entry name" value="DHHA2"/>
</dbReference>
<dbReference type="InterPro" id="IPR038222">
    <property type="entry name" value="DHHA2_dom_sf"/>
</dbReference>
<dbReference type="InterPro" id="IPR022934">
    <property type="entry name" value="Mn-dep_inorganic_PyrPase"/>
</dbReference>
<dbReference type="InterPro" id="IPR051319">
    <property type="entry name" value="Oligoribo/pAp-PDE_c-di-AMP_PDE"/>
</dbReference>
<dbReference type="NCBIfam" id="NF003877">
    <property type="entry name" value="PRK05427.1"/>
    <property type="match status" value="1"/>
</dbReference>
<dbReference type="PANTHER" id="PTHR47618">
    <property type="entry name" value="BIFUNCTIONAL OLIGORIBONUCLEASE AND PAP PHOSPHATASE NRNA"/>
    <property type="match status" value="1"/>
</dbReference>
<dbReference type="PANTHER" id="PTHR47618:SF1">
    <property type="entry name" value="BIFUNCTIONAL OLIGORIBONUCLEASE AND PAP PHOSPHATASE NRNA"/>
    <property type="match status" value="1"/>
</dbReference>
<dbReference type="Pfam" id="PF01368">
    <property type="entry name" value="DHH"/>
    <property type="match status" value="1"/>
</dbReference>
<dbReference type="Pfam" id="PF02833">
    <property type="entry name" value="DHHA2"/>
    <property type="match status" value="1"/>
</dbReference>
<dbReference type="SMART" id="SM01131">
    <property type="entry name" value="DHHA2"/>
    <property type="match status" value="1"/>
</dbReference>
<dbReference type="SUPFAM" id="SSF64182">
    <property type="entry name" value="DHH phosphoesterases"/>
    <property type="match status" value="1"/>
</dbReference>
<sequence length="311" mass="33541">MSKILVFGHQNPDSDAIGSSYAFAYLAREAYGLDTEAVALGEPNEETAFVLDYFGVAAPRVITSAKAEGAEQVILTDHNEFQQSVADIAEVEVYGVVDHHRVANFETANPLYMRLEPVGSASSIVYRMFKEHSVAVSKEIAGLMLSGLISDTLLLKSPTTHPTDKAIAPELAELAGVNLEEYGLAMLKAGTNLASKSAEELIDIDAKTFELNGNNVRVAQVNTVDIAEVLERQAEIEAAIEKAIADNGYSDFVLMITDIINSNSEILAIGSNMDKVEAAFNFVLENNHAFLAGAVSRKKQVVPQLTESFNA</sequence>
<proteinExistence type="evidence at protein level"/>
<protein>
    <recommendedName>
        <fullName>Probable manganese-dependent inorganic pyrophosphatase</fullName>
        <ecNumber>3.6.1.1</ecNumber>
    </recommendedName>
    <alternativeName>
        <fullName>Pyrophosphate phospho-hydrolase</fullName>
        <shortName>PPase</shortName>
    </alternativeName>
</protein>
<gene>
    <name type="primary">ppaC</name>
    <name type="ordered locus">SGO_1648</name>
</gene>
<reference key="1">
    <citation type="journal article" date="1996" name="Infect. Immun.">
        <title>Insertional inactivation of an intrageneric coaggregation-relevant adhesin locus from Streptococcus gordonii DL1 (Challis).</title>
        <authorList>
            <person name="Whittaker C.J."/>
            <person name="Clemans D.L."/>
            <person name="Kolenbrander P.E."/>
        </authorList>
    </citation>
    <scope>NUCLEOTIDE SEQUENCE [GENOMIC DNA]</scope>
</reference>
<reference key="2">
    <citation type="journal article" date="2007" name="J. Bacteriol.">
        <title>Genome-wide transcriptional changes in Streptococcus gordonii in response to competence signaling peptide.</title>
        <authorList>
            <person name="Vickerman M.M."/>
            <person name="Iobst S."/>
            <person name="Jesionowski A.M."/>
            <person name="Gill S.R."/>
        </authorList>
    </citation>
    <scope>NUCLEOTIDE SEQUENCE [LARGE SCALE GENOMIC DNA]</scope>
    <source>
        <strain>Challis / ATCC 35105 / BCRC 15272 / CH1 / DL1 / V288</strain>
    </source>
</reference>
<reference key="3">
    <citation type="journal article" date="2001" name="J. Mol. Biol.">
        <title>The 'open' and 'closed' structures of the type-C inorganic pyrophosphatases from Bacillus subtilis and Streptococcus gordonii.</title>
        <authorList>
            <person name="Ahn S."/>
            <person name="Milner A.J."/>
            <person name="Fuetterer K."/>
            <person name="Konopka M."/>
            <person name="Ilias M."/>
            <person name="Young T.W."/>
            <person name="White S.A."/>
        </authorList>
    </citation>
    <scope>X-RAY CRYSTALLOGRAPHY (1.5 ANGSTROMS)</scope>
</reference>
<feature type="chain" id="PRO_0000158589" description="Probable manganese-dependent inorganic pyrophosphatase">
    <location>
        <begin position="1"/>
        <end position="311"/>
    </location>
</feature>
<feature type="binding site">
    <location>
        <position position="9"/>
    </location>
    <ligand>
        <name>Mn(2+)</name>
        <dbReference type="ChEBI" id="CHEBI:29035"/>
        <label>1</label>
    </ligand>
</feature>
<feature type="binding site">
    <location>
        <position position="13"/>
    </location>
    <ligand>
        <name>Mn(2+)</name>
        <dbReference type="ChEBI" id="CHEBI:29035"/>
        <label>1</label>
    </ligand>
</feature>
<feature type="binding site">
    <location>
        <position position="15"/>
    </location>
    <ligand>
        <name>Mn(2+)</name>
        <dbReference type="ChEBI" id="CHEBI:29035"/>
        <label>2</label>
    </ligand>
</feature>
<feature type="binding site">
    <location>
        <position position="77"/>
    </location>
    <ligand>
        <name>Mn(2+)</name>
        <dbReference type="ChEBI" id="CHEBI:29035"/>
        <label>1</label>
    </ligand>
</feature>
<feature type="binding site">
    <location>
        <position position="77"/>
    </location>
    <ligand>
        <name>Mn(2+)</name>
        <dbReference type="ChEBI" id="CHEBI:29035"/>
        <label>2</label>
    </ligand>
</feature>
<feature type="binding site">
    <location>
        <position position="99"/>
    </location>
    <ligand>
        <name>Mn(2+)</name>
        <dbReference type="ChEBI" id="CHEBI:29035"/>
        <label>2</label>
    </ligand>
</feature>
<feature type="binding site">
    <location>
        <position position="151"/>
    </location>
    <ligand>
        <name>Mn(2+)</name>
        <dbReference type="ChEBI" id="CHEBI:29035"/>
        <label>2</label>
    </ligand>
</feature>
<feature type="strand" evidence="3">
    <location>
        <begin position="4"/>
        <end position="7"/>
    </location>
</feature>
<feature type="helix" evidence="3">
    <location>
        <begin position="14"/>
        <end position="31"/>
    </location>
</feature>
<feature type="strand" evidence="3">
    <location>
        <begin position="35"/>
        <end position="37"/>
    </location>
</feature>
<feature type="strand" evidence="3">
    <location>
        <begin position="39"/>
        <end position="41"/>
    </location>
</feature>
<feature type="helix" evidence="3">
    <location>
        <begin position="45"/>
        <end position="54"/>
    </location>
</feature>
<feature type="helix" evidence="3">
    <location>
        <begin position="66"/>
        <end position="68"/>
    </location>
</feature>
<feature type="strand" evidence="3">
    <location>
        <begin position="71"/>
        <end position="77"/>
    </location>
</feature>
<feature type="helix" evidence="3">
    <location>
        <begin position="81"/>
        <end position="83"/>
    </location>
</feature>
<feature type="helix" evidence="3">
    <location>
        <begin position="88"/>
        <end position="90"/>
    </location>
</feature>
<feature type="strand" evidence="3">
    <location>
        <begin position="91"/>
        <end position="98"/>
    </location>
</feature>
<feature type="strand" evidence="3">
    <location>
        <begin position="112"/>
        <end position="115"/>
    </location>
</feature>
<feature type="strand" evidence="3">
    <location>
        <begin position="117"/>
        <end position="119"/>
    </location>
</feature>
<feature type="helix" evidence="3">
    <location>
        <begin position="121"/>
        <end position="131"/>
    </location>
</feature>
<feature type="helix" evidence="3">
    <location>
        <begin position="138"/>
        <end position="152"/>
    </location>
</feature>
<feature type="turn" evidence="3">
    <location>
        <begin position="153"/>
        <end position="156"/>
    </location>
</feature>
<feature type="helix" evidence="3">
    <location>
        <begin position="162"/>
        <end position="175"/>
    </location>
</feature>
<feature type="helix" evidence="3">
    <location>
        <begin position="179"/>
        <end position="188"/>
    </location>
</feature>
<feature type="helix" evidence="3">
    <location>
        <begin position="198"/>
        <end position="201"/>
    </location>
</feature>
<feature type="strand" evidence="3">
    <location>
        <begin position="204"/>
        <end position="211"/>
    </location>
</feature>
<feature type="strand" evidence="3">
    <location>
        <begin position="214"/>
        <end position="224"/>
    </location>
</feature>
<feature type="helix" evidence="3">
    <location>
        <begin position="226"/>
        <end position="230"/>
    </location>
</feature>
<feature type="helix" evidence="3">
    <location>
        <begin position="233"/>
        <end position="247"/>
    </location>
</feature>
<feature type="strand" evidence="3">
    <location>
        <begin position="250"/>
        <end position="258"/>
    </location>
</feature>
<feature type="turn" evidence="3">
    <location>
        <begin position="259"/>
        <end position="262"/>
    </location>
</feature>
<feature type="strand" evidence="3">
    <location>
        <begin position="263"/>
        <end position="271"/>
    </location>
</feature>
<feature type="helix" evidence="3">
    <location>
        <begin position="273"/>
        <end position="280"/>
    </location>
</feature>
<feature type="strand" evidence="3">
    <location>
        <begin position="288"/>
        <end position="292"/>
    </location>
</feature>
<feature type="helix" evidence="3">
    <location>
        <begin position="297"/>
        <end position="300"/>
    </location>
</feature>
<feature type="helix" evidence="3">
    <location>
        <begin position="302"/>
        <end position="310"/>
    </location>
</feature>
<keyword id="KW-0002">3D-structure</keyword>
<keyword id="KW-0963">Cytoplasm</keyword>
<keyword id="KW-0378">Hydrolase</keyword>
<keyword id="KW-0464">Manganese</keyword>
<keyword id="KW-0479">Metal-binding</keyword>
<keyword id="KW-1185">Reference proteome</keyword>
<accession>P95765</accession>
<accession>A8AYR5</accession>
<comment type="catalytic activity">
    <reaction>
        <text>diphosphate + H2O = 2 phosphate + H(+)</text>
        <dbReference type="Rhea" id="RHEA:24576"/>
        <dbReference type="ChEBI" id="CHEBI:15377"/>
        <dbReference type="ChEBI" id="CHEBI:15378"/>
        <dbReference type="ChEBI" id="CHEBI:33019"/>
        <dbReference type="ChEBI" id="CHEBI:43474"/>
        <dbReference type="EC" id="3.6.1.1"/>
    </reaction>
</comment>
<comment type="cofactor">
    <cofactor>
        <name>Mn(2+)</name>
        <dbReference type="ChEBI" id="CHEBI:29035"/>
    </cofactor>
    <text>Binds 2 manganese ions per subunit.</text>
</comment>
<comment type="subunit">
    <text>Homodimer.</text>
</comment>
<comment type="subcellular location">
    <subcellularLocation>
        <location evidence="1">Cytoplasm</location>
    </subcellularLocation>
</comment>
<comment type="similarity">
    <text evidence="2">Belongs to the PPase class C family.</text>
</comment>